<reference key="1">
    <citation type="journal article" date="2010" name="J. Bacteriol.">
        <title>Genome sequence of the Fleming strain of Micrococcus luteus, a simple free-living actinobacterium.</title>
        <authorList>
            <person name="Young M."/>
            <person name="Artsatbanov V."/>
            <person name="Beller H.R."/>
            <person name="Chandra G."/>
            <person name="Chater K.F."/>
            <person name="Dover L.G."/>
            <person name="Goh E.B."/>
            <person name="Kahan T."/>
            <person name="Kaprelyants A.S."/>
            <person name="Kyrpides N."/>
            <person name="Lapidus A."/>
            <person name="Lowry S.R."/>
            <person name="Lykidis A."/>
            <person name="Mahillon J."/>
            <person name="Markowitz V."/>
            <person name="Mavromatis K."/>
            <person name="Mukamolova G.V."/>
            <person name="Oren A."/>
            <person name="Rokem J.S."/>
            <person name="Smith M.C."/>
            <person name="Young D.I."/>
            <person name="Greenblatt C.L."/>
        </authorList>
    </citation>
    <scope>NUCLEOTIDE SEQUENCE [LARGE SCALE GENOMIC DNA]</scope>
    <source>
        <strain>ATCC 4698 / DSM 20030 / JCM 1464 / CCM 169 / CCUG 5858 / IAM 1056 / NBRC 3333 / NCIMB 9278 / NCTC 2665 / VKM Ac-2230</strain>
    </source>
</reference>
<feature type="chain" id="PRO_1000201997" description="Holliday junction branch migration complex subunit RuvA">
    <location>
        <begin position="1"/>
        <end position="214"/>
    </location>
</feature>
<feature type="region of interest" description="Domain I" evidence="1">
    <location>
        <begin position="1"/>
        <end position="63"/>
    </location>
</feature>
<feature type="region of interest" description="Domain II" evidence="1">
    <location>
        <begin position="64"/>
        <end position="142"/>
    </location>
</feature>
<feature type="region of interest" description="Flexible linker" evidence="1">
    <location>
        <begin position="143"/>
        <end position="151"/>
    </location>
</feature>
<feature type="region of interest" description="Domain III" evidence="1">
    <location>
        <begin position="151"/>
        <end position="214"/>
    </location>
</feature>
<gene>
    <name evidence="1" type="primary">ruvA</name>
    <name type="ordered locus">Mlut_12890</name>
</gene>
<name>RUVA_MICLC</name>
<keyword id="KW-0963">Cytoplasm</keyword>
<keyword id="KW-0227">DNA damage</keyword>
<keyword id="KW-0233">DNA recombination</keyword>
<keyword id="KW-0234">DNA repair</keyword>
<keyword id="KW-0238">DNA-binding</keyword>
<keyword id="KW-1185">Reference proteome</keyword>
<comment type="function">
    <text evidence="1">The RuvA-RuvB-RuvC complex processes Holliday junction (HJ) DNA during genetic recombination and DNA repair, while the RuvA-RuvB complex plays an important role in the rescue of blocked DNA replication forks via replication fork reversal (RFR). RuvA specifically binds to HJ cruciform DNA, conferring on it an open structure. The RuvB hexamer acts as an ATP-dependent pump, pulling dsDNA into and through the RuvAB complex. HJ branch migration allows RuvC to scan DNA until it finds its consensus sequence, where it cleaves and resolves the cruciform DNA.</text>
</comment>
<comment type="subunit">
    <text evidence="1">Homotetramer. Forms an RuvA(8)-RuvB(12)-Holliday junction (HJ) complex. HJ DNA is sandwiched between 2 RuvA tetramers; dsDNA enters through RuvA and exits via RuvB. An RuvB hexamer assembles on each DNA strand where it exits the tetramer. Each RuvB hexamer is contacted by two RuvA subunits (via domain III) on 2 adjacent RuvB subunits; this complex drives branch migration. In the full resolvosome a probable DNA-RuvA(4)-RuvB(12)-RuvC(2) complex forms which resolves the HJ.</text>
</comment>
<comment type="subcellular location">
    <subcellularLocation>
        <location evidence="1">Cytoplasm</location>
    </subcellularLocation>
</comment>
<comment type="domain">
    <text evidence="1">Has three domains with a flexible linker between the domains II and III and assumes an 'L' shape. Domain III is highly mobile and contacts RuvB.</text>
</comment>
<comment type="similarity">
    <text evidence="1">Belongs to the RuvA family.</text>
</comment>
<sequence>MIASLSGTVEHVALDRAVIAVGGLGVQFSATPQTLSTLHEGRPGAVQTHLVVKEDALTLYGFADRDEREVFEVLITANGVGPRLALAILSVHHPETVRRAVTEEDEKTLTRVPGIGPKMARKIIVELSGRLAPTGEPVPGAEAEASDEPAVETVWHADVVQAMAGLGWSEKEALKAVEATVAARPELDEGRDVAALLRATLRDVGMAGAVRGGR</sequence>
<accession>C5CCI2</accession>
<evidence type="ECO:0000255" key="1">
    <source>
        <dbReference type="HAMAP-Rule" id="MF_00031"/>
    </source>
</evidence>
<dbReference type="EMBL" id="CP001628">
    <property type="protein sequence ID" value="ACS30794.1"/>
    <property type="molecule type" value="Genomic_DNA"/>
</dbReference>
<dbReference type="RefSeq" id="WP_012750902.1">
    <property type="nucleotide sequence ID" value="NC_012803.1"/>
</dbReference>
<dbReference type="SMR" id="C5CCI2"/>
<dbReference type="STRING" id="465515.Mlut_12890"/>
<dbReference type="EnsemblBacteria" id="ACS30794">
    <property type="protein sequence ID" value="ACS30794"/>
    <property type="gene ID" value="Mlut_12890"/>
</dbReference>
<dbReference type="GeneID" id="93345444"/>
<dbReference type="KEGG" id="mlu:Mlut_12890"/>
<dbReference type="PATRIC" id="fig|465515.4.peg.1230"/>
<dbReference type="eggNOG" id="COG0632">
    <property type="taxonomic scope" value="Bacteria"/>
</dbReference>
<dbReference type="HOGENOM" id="CLU_087936_2_1_11"/>
<dbReference type="Proteomes" id="UP000000738">
    <property type="component" value="Chromosome"/>
</dbReference>
<dbReference type="GO" id="GO:0005737">
    <property type="term" value="C:cytoplasm"/>
    <property type="evidence" value="ECO:0007669"/>
    <property type="project" value="UniProtKB-SubCell"/>
</dbReference>
<dbReference type="GO" id="GO:0009379">
    <property type="term" value="C:Holliday junction helicase complex"/>
    <property type="evidence" value="ECO:0007669"/>
    <property type="project" value="InterPro"/>
</dbReference>
<dbReference type="GO" id="GO:0048476">
    <property type="term" value="C:Holliday junction resolvase complex"/>
    <property type="evidence" value="ECO:0007669"/>
    <property type="project" value="UniProtKB-UniRule"/>
</dbReference>
<dbReference type="GO" id="GO:0005524">
    <property type="term" value="F:ATP binding"/>
    <property type="evidence" value="ECO:0007669"/>
    <property type="project" value="InterPro"/>
</dbReference>
<dbReference type="GO" id="GO:0000400">
    <property type="term" value="F:four-way junction DNA binding"/>
    <property type="evidence" value="ECO:0007669"/>
    <property type="project" value="UniProtKB-UniRule"/>
</dbReference>
<dbReference type="GO" id="GO:0009378">
    <property type="term" value="F:four-way junction helicase activity"/>
    <property type="evidence" value="ECO:0007669"/>
    <property type="project" value="InterPro"/>
</dbReference>
<dbReference type="GO" id="GO:0006310">
    <property type="term" value="P:DNA recombination"/>
    <property type="evidence" value="ECO:0007669"/>
    <property type="project" value="UniProtKB-UniRule"/>
</dbReference>
<dbReference type="GO" id="GO:0006281">
    <property type="term" value="P:DNA repair"/>
    <property type="evidence" value="ECO:0007669"/>
    <property type="project" value="UniProtKB-UniRule"/>
</dbReference>
<dbReference type="CDD" id="cd14332">
    <property type="entry name" value="UBA_RuvA_C"/>
    <property type="match status" value="1"/>
</dbReference>
<dbReference type="Gene3D" id="1.10.150.20">
    <property type="entry name" value="5' to 3' exonuclease, C-terminal subdomain"/>
    <property type="match status" value="1"/>
</dbReference>
<dbReference type="Gene3D" id="1.10.8.10">
    <property type="entry name" value="DNA helicase RuvA subunit, C-terminal domain"/>
    <property type="match status" value="1"/>
</dbReference>
<dbReference type="Gene3D" id="2.40.50.140">
    <property type="entry name" value="Nucleic acid-binding proteins"/>
    <property type="match status" value="1"/>
</dbReference>
<dbReference type="HAMAP" id="MF_00031">
    <property type="entry name" value="DNA_HJ_migration_RuvA"/>
    <property type="match status" value="1"/>
</dbReference>
<dbReference type="InterPro" id="IPR013849">
    <property type="entry name" value="DNA_helicase_Holl-junc_RuvA_I"/>
</dbReference>
<dbReference type="InterPro" id="IPR003583">
    <property type="entry name" value="Hlx-hairpin-Hlx_DNA-bd_motif"/>
</dbReference>
<dbReference type="InterPro" id="IPR012340">
    <property type="entry name" value="NA-bd_OB-fold"/>
</dbReference>
<dbReference type="InterPro" id="IPR000085">
    <property type="entry name" value="RuvA"/>
</dbReference>
<dbReference type="InterPro" id="IPR010994">
    <property type="entry name" value="RuvA_2-like"/>
</dbReference>
<dbReference type="InterPro" id="IPR011114">
    <property type="entry name" value="RuvA_C"/>
</dbReference>
<dbReference type="InterPro" id="IPR036267">
    <property type="entry name" value="RuvA_C_sf"/>
</dbReference>
<dbReference type="NCBIfam" id="TIGR00084">
    <property type="entry name" value="ruvA"/>
    <property type="match status" value="1"/>
</dbReference>
<dbReference type="Pfam" id="PF14520">
    <property type="entry name" value="HHH_5"/>
    <property type="match status" value="1"/>
</dbReference>
<dbReference type="Pfam" id="PF07499">
    <property type="entry name" value="RuvA_C"/>
    <property type="match status" value="1"/>
</dbReference>
<dbReference type="Pfam" id="PF01330">
    <property type="entry name" value="RuvA_N"/>
    <property type="match status" value="1"/>
</dbReference>
<dbReference type="SMART" id="SM00278">
    <property type="entry name" value="HhH1"/>
    <property type="match status" value="2"/>
</dbReference>
<dbReference type="SUPFAM" id="SSF46929">
    <property type="entry name" value="DNA helicase RuvA subunit, C-terminal domain"/>
    <property type="match status" value="1"/>
</dbReference>
<dbReference type="SUPFAM" id="SSF50249">
    <property type="entry name" value="Nucleic acid-binding proteins"/>
    <property type="match status" value="1"/>
</dbReference>
<dbReference type="SUPFAM" id="SSF47781">
    <property type="entry name" value="RuvA domain 2-like"/>
    <property type="match status" value="1"/>
</dbReference>
<proteinExistence type="inferred from homology"/>
<protein>
    <recommendedName>
        <fullName evidence="1">Holliday junction branch migration complex subunit RuvA</fullName>
    </recommendedName>
</protein>
<organism>
    <name type="scientific">Micrococcus luteus (strain ATCC 4698 / DSM 20030 / JCM 1464 / CCM 169 / CCUG 5858 / IAM 1056 / NBRC 3333 / NCIMB 9278 / NCTC 2665 / VKM Ac-2230)</name>
    <name type="common">Micrococcus lysodeikticus</name>
    <dbReference type="NCBI Taxonomy" id="465515"/>
    <lineage>
        <taxon>Bacteria</taxon>
        <taxon>Bacillati</taxon>
        <taxon>Actinomycetota</taxon>
        <taxon>Actinomycetes</taxon>
        <taxon>Micrococcales</taxon>
        <taxon>Micrococcaceae</taxon>
        <taxon>Micrococcus</taxon>
    </lineage>
</organism>